<reference key="1">
    <citation type="journal article" date="2008" name="J. Bacteriol.">
        <title>Insights into the environmental resistance gene pool from the genome sequence of the multidrug-resistant environmental isolate Escherichia coli SMS-3-5.</title>
        <authorList>
            <person name="Fricke W.F."/>
            <person name="Wright M.S."/>
            <person name="Lindell A.H."/>
            <person name="Harkins D.M."/>
            <person name="Baker-Austin C."/>
            <person name="Ravel J."/>
            <person name="Stepanauskas R."/>
        </authorList>
    </citation>
    <scope>NUCLEOTIDE SEQUENCE [LARGE SCALE GENOMIC DNA]</scope>
    <source>
        <strain>SMS-3-5 / SECEC</strain>
    </source>
</reference>
<sequence>MAGNTIGQLFRVTTFGESHGLALGCIVDGVPPGIPLTEADLQHDLDRRRPGTSRYTTQRREPDQVKILSGVFEGVTTGTSIGLLIENTDQRSQDYSAIKDVFRPGHADYTYEQKYGLRDYRGGGRSSARETAMRVAAGAIAKKYLAEKFGIEIRGCLTQMGDIPLEIKDWSQVEQNPFFCPDPDKIDALDELMRALKKEGDSIGAKVTVVASGVPAGLGEPVFDRLDADIAHALMSINAVKGVEIGDGFDVVALRGSQNRDEITKDGFQSNHAGGILGGISSGQQIIAHMALKPTSSITVPGRTINRFGEEVEMITKGRHDPCVGIRAVPIAEAMLAIVLMDHLLRQRAQNADVKTDIPRW</sequence>
<comment type="function">
    <text evidence="1">Catalyzes the anti-1,4-elimination of the C-3 phosphate and the C-6 proR hydrogen from 5-enolpyruvylshikimate-3-phosphate (EPSP) to yield chorismate, which is the branch point compound that serves as the starting substrate for the three terminal pathways of aromatic amino acid biosynthesis. This reaction introduces a second double bond into the aromatic ring system.</text>
</comment>
<comment type="catalytic activity">
    <reaction evidence="1">
        <text>5-O-(1-carboxyvinyl)-3-phosphoshikimate = chorismate + phosphate</text>
        <dbReference type="Rhea" id="RHEA:21020"/>
        <dbReference type="ChEBI" id="CHEBI:29748"/>
        <dbReference type="ChEBI" id="CHEBI:43474"/>
        <dbReference type="ChEBI" id="CHEBI:57701"/>
        <dbReference type="EC" id="4.2.3.5"/>
    </reaction>
</comment>
<comment type="cofactor">
    <cofactor evidence="1">
        <name>FMNH2</name>
        <dbReference type="ChEBI" id="CHEBI:57618"/>
    </cofactor>
    <text evidence="1">Reduced FMN (FMNH(2)).</text>
</comment>
<comment type="pathway">
    <text evidence="1">Metabolic intermediate biosynthesis; chorismate biosynthesis; chorismate from D-erythrose 4-phosphate and phosphoenolpyruvate: step 7/7.</text>
</comment>
<comment type="subunit">
    <text evidence="1">Homotetramer.</text>
</comment>
<comment type="similarity">
    <text evidence="1">Belongs to the chorismate synthase family.</text>
</comment>
<feature type="chain" id="PRO_1000119493" description="Chorismate synthase">
    <location>
        <begin position="1"/>
        <end position="361"/>
    </location>
</feature>
<feature type="binding site" evidence="1">
    <location>
        <position position="48"/>
    </location>
    <ligand>
        <name>NADP(+)</name>
        <dbReference type="ChEBI" id="CHEBI:58349"/>
    </ligand>
</feature>
<feature type="binding site" evidence="1">
    <location>
        <position position="54"/>
    </location>
    <ligand>
        <name>NADP(+)</name>
        <dbReference type="ChEBI" id="CHEBI:58349"/>
    </ligand>
</feature>
<feature type="binding site" evidence="1">
    <location>
        <begin position="125"/>
        <end position="127"/>
    </location>
    <ligand>
        <name>FMN</name>
        <dbReference type="ChEBI" id="CHEBI:58210"/>
    </ligand>
</feature>
<feature type="binding site" evidence="1">
    <location>
        <begin position="238"/>
        <end position="239"/>
    </location>
    <ligand>
        <name>FMN</name>
        <dbReference type="ChEBI" id="CHEBI:58210"/>
    </ligand>
</feature>
<feature type="binding site" evidence="1">
    <location>
        <position position="278"/>
    </location>
    <ligand>
        <name>FMN</name>
        <dbReference type="ChEBI" id="CHEBI:58210"/>
    </ligand>
</feature>
<feature type="binding site" evidence="1">
    <location>
        <begin position="293"/>
        <end position="297"/>
    </location>
    <ligand>
        <name>FMN</name>
        <dbReference type="ChEBI" id="CHEBI:58210"/>
    </ligand>
</feature>
<feature type="binding site" evidence="1">
    <location>
        <position position="319"/>
    </location>
    <ligand>
        <name>FMN</name>
        <dbReference type="ChEBI" id="CHEBI:58210"/>
    </ligand>
</feature>
<dbReference type="EC" id="4.2.3.5" evidence="1"/>
<dbReference type="EMBL" id="CP000970">
    <property type="protein sequence ID" value="ACB16839.1"/>
    <property type="molecule type" value="Genomic_DNA"/>
</dbReference>
<dbReference type="RefSeq" id="WP_001297933.1">
    <property type="nucleotide sequence ID" value="NC_010498.1"/>
</dbReference>
<dbReference type="SMR" id="B1LLT5"/>
<dbReference type="KEGG" id="ecm:EcSMS35_2486"/>
<dbReference type="HOGENOM" id="CLU_034547_0_2_6"/>
<dbReference type="UniPathway" id="UPA00053">
    <property type="reaction ID" value="UER00090"/>
</dbReference>
<dbReference type="Proteomes" id="UP000007011">
    <property type="component" value="Chromosome"/>
</dbReference>
<dbReference type="GO" id="GO:0005829">
    <property type="term" value="C:cytosol"/>
    <property type="evidence" value="ECO:0007669"/>
    <property type="project" value="TreeGrafter"/>
</dbReference>
<dbReference type="GO" id="GO:0004107">
    <property type="term" value="F:chorismate synthase activity"/>
    <property type="evidence" value="ECO:0007669"/>
    <property type="project" value="UniProtKB-UniRule"/>
</dbReference>
<dbReference type="GO" id="GO:0010181">
    <property type="term" value="F:FMN binding"/>
    <property type="evidence" value="ECO:0007669"/>
    <property type="project" value="TreeGrafter"/>
</dbReference>
<dbReference type="GO" id="GO:0008652">
    <property type="term" value="P:amino acid biosynthetic process"/>
    <property type="evidence" value="ECO:0007669"/>
    <property type="project" value="UniProtKB-KW"/>
</dbReference>
<dbReference type="GO" id="GO:0009073">
    <property type="term" value="P:aromatic amino acid family biosynthetic process"/>
    <property type="evidence" value="ECO:0007669"/>
    <property type="project" value="UniProtKB-KW"/>
</dbReference>
<dbReference type="GO" id="GO:0009423">
    <property type="term" value="P:chorismate biosynthetic process"/>
    <property type="evidence" value="ECO:0007669"/>
    <property type="project" value="UniProtKB-UniRule"/>
</dbReference>
<dbReference type="CDD" id="cd07304">
    <property type="entry name" value="Chorismate_synthase"/>
    <property type="match status" value="1"/>
</dbReference>
<dbReference type="FunFam" id="3.60.150.10:FF:000001">
    <property type="entry name" value="Chorismate synthase"/>
    <property type="match status" value="1"/>
</dbReference>
<dbReference type="Gene3D" id="3.60.150.10">
    <property type="entry name" value="Chorismate synthase AroC"/>
    <property type="match status" value="1"/>
</dbReference>
<dbReference type="HAMAP" id="MF_00300">
    <property type="entry name" value="Chorismate_synth"/>
    <property type="match status" value="1"/>
</dbReference>
<dbReference type="InterPro" id="IPR000453">
    <property type="entry name" value="Chorismate_synth"/>
</dbReference>
<dbReference type="InterPro" id="IPR035904">
    <property type="entry name" value="Chorismate_synth_AroC_sf"/>
</dbReference>
<dbReference type="InterPro" id="IPR020541">
    <property type="entry name" value="Chorismate_synthase_CS"/>
</dbReference>
<dbReference type="NCBIfam" id="TIGR00033">
    <property type="entry name" value="aroC"/>
    <property type="match status" value="1"/>
</dbReference>
<dbReference type="NCBIfam" id="NF003793">
    <property type="entry name" value="PRK05382.1"/>
    <property type="match status" value="1"/>
</dbReference>
<dbReference type="PANTHER" id="PTHR21085">
    <property type="entry name" value="CHORISMATE SYNTHASE"/>
    <property type="match status" value="1"/>
</dbReference>
<dbReference type="PANTHER" id="PTHR21085:SF0">
    <property type="entry name" value="CHORISMATE SYNTHASE"/>
    <property type="match status" value="1"/>
</dbReference>
<dbReference type="Pfam" id="PF01264">
    <property type="entry name" value="Chorismate_synt"/>
    <property type="match status" value="1"/>
</dbReference>
<dbReference type="PIRSF" id="PIRSF001456">
    <property type="entry name" value="Chorismate_synth"/>
    <property type="match status" value="1"/>
</dbReference>
<dbReference type="SUPFAM" id="SSF103263">
    <property type="entry name" value="Chorismate synthase, AroC"/>
    <property type="match status" value="1"/>
</dbReference>
<dbReference type="PROSITE" id="PS00787">
    <property type="entry name" value="CHORISMATE_SYNTHASE_1"/>
    <property type="match status" value="1"/>
</dbReference>
<dbReference type="PROSITE" id="PS00788">
    <property type="entry name" value="CHORISMATE_SYNTHASE_2"/>
    <property type="match status" value="1"/>
</dbReference>
<dbReference type="PROSITE" id="PS00789">
    <property type="entry name" value="CHORISMATE_SYNTHASE_3"/>
    <property type="match status" value="1"/>
</dbReference>
<gene>
    <name evidence="1" type="primary">aroC</name>
    <name type="ordered locus">EcSMS35_2486</name>
</gene>
<name>AROC_ECOSM</name>
<proteinExistence type="inferred from homology"/>
<accession>B1LLT5</accession>
<protein>
    <recommendedName>
        <fullName evidence="1">Chorismate synthase</fullName>
        <shortName evidence="1">CS</shortName>
        <ecNumber evidence="1">4.2.3.5</ecNumber>
    </recommendedName>
    <alternativeName>
        <fullName evidence="1">5-enolpyruvylshikimate-3-phosphate phospholyase</fullName>
    </alternativeName>
</protein>
<organism>
    <name type="scientific">Escherichia coli (strain SMS-3-5 / SECEC)</name>
    <dbReference type="NCBI Taxonomy" id="439855"/>
    <lineage>
        <taxon>Bacteria</taxon>
        <taxon>Pseudomonadati</taxon>
        <taxon>Pseudomonadota</taxon>
        <taxon>Gammaproteobacteria</taxon>
        <taxon>Enterobacterales</taxon>
        <taxon>Enterobacteriaceae</taxon>
        <taxon>Escherichia</taxon>
    </lineage>
</organism>
<evidence type="ECO:0000255" key="1">
    <source>
        <dbReference type="HAMAP-Rule" id="MF_00300"/>
    </source>
</evidence>
<keyword id="KW-0028">Amino-acid biosynthesis</keyword>
<keyword id="KW-0057">Aromatic amino acid biosynthesis</keyword>
<keyword id="KW-0274">FAD</keyword>
<keyword id="KW-0285">Flavoprotein</keyword>
<keyword id="KW-0288">FMN</keyword>
<keyword id="KW-0456">Lyase</keyword>
<keyword id="KW-0521">NADP</keyword>